<proteinExistence type="inferred from homology"/>
<keyword id="KW-0997">Cell inner membrane</keyword>
<keyword id="KW-1003">Cell membrane</keyword>
<keyword id="KW-0472">Membrane</keyword>
<keyword id="KW-0520">NAD</keyword>
<keyword id="KW-0874">Quinone</keyword>
<keyword id="KW-1278">Translocase</keyword>
<keyword id="KW-0813">Transport</keyword>
<keyword id="KW-0830">Ubiquinone</keyword>
<comment type="function">
    <text evidence="1">NDH-1 shuttles electrons from NADH, via FMN and iron-sulfur (Fe-S) centers, to quinones in the respiratory chain. The immediate electron acceptor for the enzyme in this species is believed to be ubiquinone. Couples the redox reaction to proton translocation (for every two electrons transferred, four hydrogen ions are translocated across the cytoplasmic membrane), and thus conserves the redox energy in a proton gradient.</text>
</comment>
<comment type="catalytic activity">
    <reaction evidence="1">
        <text>a quinone + NADH + 5 H(+)(in) = a quinol + NAD(+) + 4 H(+)(out)</text>
        <dbReference type="Rhea" id="RHEA:57888"/>
        <dbReference type="ChEBI" id="CHEBI:15378"/>
        <dbReference type="ChEBI" id="CHEBI:24646"/>
        <dbReference type="ChEBI" id="CHEBI:57540"/>
        <dbReference type="ChEBI" id="CHEBI:57945"/>
        <dbReference type="ChEBI" id="CHEBI:132124"/>
    </reaction>
</comment>
<comment type="subunit">
    <text evidence="1">NDH-1 is composed of 14 different subunits. Subunits NuoB, C, D, E, F, and G constitute the peripheral sector of the complex.</text>
</comment>
<comment type="subcellular location">
    <subcellularLocation>
        <location evidence="1">Cell inner membrane</location>
        <topology evidence="1">Peripheral membrane protein</topology>
        <orientation evidence="1">Cytoplasmic side</orientation>
    </subcellularLocation>
</comment>
<comment type="similarity">
    <text evidence="1">Belongs to the complex I 49 kDa subunit family.</text>
</comment>
<protein>
    <recommendedName>
        <fullName evidence="1">NADH-quinone oxidoreductase subunit D 2</fullName>
        <ecNumber evidence="1">7.1.1.-</ecNumber>
    </recommendedName>
    <alternativeName>
        <fullName evidence="1">NADH dehydrogenase I subunit D 2</fullName>
    </alternativeName>
    <alternativeName>
        <fullName evidence="1">NDH-1 subunit D 2</fullName>
    </alternativeName>
</protein>
<feature type="chain" id="PRO_0000371925" description="NADH-quinone oxidoreductase subunit D 2">
    <location>
        <begin position="1"/>
        <end position="370"/>
    </location>
</feature>
<organism>
    <name type="scientific">Solibacter usitatus (strain Ellin6076)</name>
    <dbReference type="NCBI Taxonomy" id="234267"/>
    <lineage>
        <taxon>Bacteria</taxon>
        <taxon>Pseudomonadati</taxon>
        <taxon>Acidobacteriota</taxon>
        <taxon>Terriglobia</taxon>
        <taxon>Bryobacterales</taxon>
        <taxon>Solibacteraceae</taxon>
        <taxon>Candidatus Solibacter</taxon>
    </lineage>
</organism>
<evidence type="ECO:0000255" key="1">
    <source>
        <dbReference type="HAMAP-Rule" id="MF_01358"/>
    </source>
</evidence>
<dbReference type="EC" id="7.1.1.-" evidence="1"/>
<dbReference type="EMBL" id="CP000473">
    <property type="protein sequence ID" value="ABJ86631.1"/>
    <property type="molecule type" value="Genomic_DNA"/>
</dbReference>
<dbReference type="SMR" id="Q01UN9"/>
<dbReference type="FunCoup" id="Q01UN9">
    <property type="interactions" value="452"/>
</dbReference>
<dbReference type="STRING" id="234267.Acid_5684"/>
<dbReference type="KEGG" id="sus:Acid_5684"/>
<dbReference type="eggNOG" id="COG0649">
    <property type="taxonomic scope" value="Bacteria"/>
</dbReference>
<dbReference type="HOGENOM" id="CLU_015134_1_2_0"/>
<dbReference type="InParanoid" id="Q01UN9"/>
<dbReference type="OrthoDB" id="9801496at2"/>
<dbReference type="GO" id="GO:0005886">
    <property type="term" value="C:plasma membrane"/>
    <property type="evidence" value="ECO:0007669"/>
    <property type="project" value="UniProtKB-SubCell"/>
</dbReference>
<dbReference type="GO" id="GO:0051287">
    <property type="term" value="F:NAD binding"/>
    <property type="evidence" value="ECO:0007669"/>
    <property type="project" value="InterPro"/>
</dbReference>
<dbReference type="GO" id="GO:0050136">
    <property type="term" value="F:NADH:ubiquinone reductase (non-electrogenic) activity"/>
    <property type="evidence" value="ECO:0007669"/>
    <property type="project" value="UniProtKB-UniRule"/>
</dbReference>
<dbReference type="GO" id="GO:0048038">
    <property type="term" value="F:quinone binding"/>
    <property type="evidence" value="ECO:0007669"/>
    <property type="project" value="UniProtKB-KW"/>
</dbReference>
<dbReference type="Gene3D" id="1.10.645.10">
    <property type="entry name" value="Cytochrome-c3 Hydrogenase, chain B"/>
    <property type="match status" value="1"/>
</dbReference>
<dbReference type="HAMAP" id="MF_01358">
    <property type="entry name" value="NDH1_NuoD"/>
    <property type="match status" value="1"/>
</dbReference>
<dbReference type="InterPro" id="IPR001135">
    <property type="entry name" value="NADH_Q_OxRdtase_suD"/>
</dbReference>
<dbReference type="InterPro" id="IPR014029">
    <property type="entry name" value="NADH_UbQ_OxRdtase_49kDa_CS"/>
</dbReference>
<dbReference type="InterPro" id="IPR022885">
    <property type="entry name" value="NDH1_su_D/H"/>
</dbReference>
<dbReference type="InterPro" id="IPR029014">
    <property type="entry name" value="NiFe-Hase_large"/>
</dbReference>
<dbReference type="NCBIfam" id="NF004739">
    <property type="entry name" value="PRK06075.1"/>
    <property type="match status" value="1"/>
</dbReference>
<dbReference type="PANTHER" id="PTHR11993:SF10">
    <property type="entry name" value="NADH DEHYDROGENASE [UBIQUINONE] IRON-SULFUR PROTEIN 2, MITOCHONDRIAL"/>
    <property type="match status" value="1"/>
</dbReference>
<dbReference type="PANTHER" id="PTHR11993">
    <property type="entry name" value="NADH-UBIQUINONE OXIDOREDUCTASE 49 KDA SUBUNIT"/>
    <property type="match status" value="1"/>
</dbReference>
<dbReference type="Pfam" id="PF00346">
    <property type="entry name" value="Complex1_49kDa"/>
    <property type="match status" value="2"/>
</dbReference>
<dbReference type="SUPFAM" id="SSF56762">
    <property type="entry name" value="HydB/Nqo4-like"/>
    <property type="match status" value="1"/>
</dbReference>
<dbReference type="PROSITE" id="PS00535">
    <property type="entry name" value="COMPLEX1_49K"/>
    <property type="match status" value="1"/>
</dbReference>
<gene>
    <name evidence="1" type="primary">nuoD2</name>
    <name type="ordered locus">Acid_5684</name>
</gene>
<accession>Q01UN9</accession>
<reference key="1">
    <citation type="journal article" date="2009" name="Appl. Environ. Microbiol.">
        <title>Three genomes from the phylum Acidobacteria provide insight into the lifestyles of these microorganisms in soils.</title>
        <authorList>
            <person name="Ward N.L."/>
            <person name="Challacombe J.F."/>
            <person name="Janssen P.H."/>
            <person name="Henrissat B."/>
            <person name="Coutinho P.M."/>
            <person name="Wu M."/>
            <person name="Xie G."/>
            <person name="Haft D.H."/>
            <person name="Sait M."/>
            <person name="Badger J."/>
            <person name="Barabote R.D."/>
            <person name="Bradley B."/>
            <person name="Brettin T.S."/>
            <person name="Brinkac L.M."/>
            <person name="Bruce D."/>
            <person name="Creasy T."/>
            <person name="Daugherty S.C."/>
            <person name="Davidsen T.M."/>
            <person name="DeBoy R.T."/>
            <person name="Detter J.C."/>
            <person name="Dodson R.J."/>
            <person name="Durkin A.S."/>
            <person name="Ganapathy A."/>
            <person name="Gwinn-Giglio M."/>
            <person name="Han C.S."/>
            <person name="Khouri H."/>
            <person name="Kiss H."/>
            <person name="Kothari S.P."/>
            <person name="Madupu R."/>
            <person name="Nelson K.E."/>
            <person name="Nelson W.C."/>
            <person name="Paulsen I."/>
            <person name="Penn K."/>
            <person name="Ren Q."/>
            <person name="Rosovitz M.J."/>
            <person name="Selengut J.D."/>
            <person name="Shrivastava S."/>
            <person name="Sullivan S.A."/>
            <person name="Tapia R."/>
            <person name="Thompson L.S."/>
            <person name="Watkins K.L."/>
            <person name="Yang Q."/>
            <person name="Yu C."/>
            <person name="Zafar N."/>
            <person name="Zhou L."/>
            <person name="Kuske C.R."/>
        </authorList>
    </citation>
    <scope>NUCLEOTIDE SEQUENCE [LARGE SCALE GENOMIC DNA]</scope>
    <source>
        <strain>Ellin6076</strain>
    </source>
</reference>
<sequence length="370" mass="41613">MPDSTFLDSTELVLNMGPQHPSTHGVLRVILKLDGEKVLGTDCIIGYLHRGVEKIAENRTYAQFNPYVDRMDYVAAVSNGLGYCLAIEKLLNVEAPPRAQCIRVILTELNRIASHLLWLGTHALDIGAITPVFYCLREREEALKIFEKYCGARLTTHAFRIGGLLYETYDGFEQEIRDFCKMFIPKVDEYEELLTNNRIWVGRLKDVGILSADECKEFGVTGPVLRAAGVKWDLRKAQPYSGYEKYDFEIPTRVNGDTYDRYIVRMEEMRQSVRIMQQAVDGIPEGPIMGKVGKVIKPPIGEAYVSIEAPKGELGYYAVSDGSTQPYRIRVRPPSFVNLQALDRMIRGGLIADVVAVIGTLDIVLGEIDR</sequence>
<name>NUOD2_SOLUE</name>